<protein>
    <recommendedName>
        <fullName>DNA primase small subunit</fullName>
        <ecNumber>2.7.7.-</ecNumber>
    </recommendedName>
</protein>
<keyword id="KW-0235">DNA replication</keyword>
<keyword id="KW-0240">DNA-directed RNA polymerase</keyword>
<keyword id="KW-0479">Metal-binding</keyword>
<keyword id="KW-0548">Nucleotidyltransferase</keyword>
<keyword id="KW-0639">Primosome</keyword>
<keyword id="KW-1185">Reference proteome</keyword>
<keyword id="KW-0804">Transcription</keyword>
<keyword id="KW-0808">Transferase</keyword>
<keyword id="KW-0862">Zinc</keyword>
<sequence>MSYNSIRLPQDLPIYYKNFFPVKPFTKWLRYGQNNGDYFNRREFAFILADDVHIRYRSYNDEHAFFKALSSTNPEKLDIGAVYNHEPINNKRHTDYQAVERELVFDIDLTDYDPVRNCCKDATVCPKCWKFMVLAVKILDFQLEDMFDFKARMWVFSGRRGVHCWVGDKKARMLNNYQRSAIATRLNLFKKNGQCEVTEGRAKMTKVPPIVRDAFNVALKDGVFEKMIYDQGWLDKEDFITEYKFMSEVGRDDLRSLSETYKTPQERWNMIRGLFDDDYRKSLSPKDGLLDFKMQGRDRNYLLYFVLQRCYPRLDVNVSTGTNHLLKSPFCIHPKTGNVAVPLNVGKIEEFDVSKCPRIDHVVEELSSLLAERGNDENEDSKNRKFLAYKHGALAPYVENFEKFVSACIS</sequence>
<proteinExistence type="inferred from homology"/>
<reference key="1">
    <citation type="journal article" date="1994" name="Nature">
        <title>2.2 Mb of contiguous nucleotide sequence from chromosome III of C. elegans.</title>
        <authorList>
            <person name="Wilson R."/>
            <person name="Ainscough R."/>
            <person name="Anderson K."/>
            <person name="Baynes C."/>
            <person name="Berks M."/>
            <person name="Bonfield J."/>
            <person name="Burton J."/>
            <person name="Connell M."/>
            <person name="Copsey T."/>
            <person name="Cooper J."/>
            <person name="Coulson A."/>
            <person name="Craxton M."/>
            <person name="Dear S."/>
            <person name="Du Z."/>
            <person name="Durbin R."/>
            <person name="Favello A."/>
            <person name="Fraser A."/>
            <person name="Fulton L."/>
            <person name="Gardner A."/>
            <person name="Green P."/>
            <person name="Hawkins T."/>
            <person name="Hillier L."/>
            <person name="Jier M."/>
            <person name="Johnston L."/>
            <person name="Jones M."/>
            <person name="Kershaw J."/>
            <person name="Kirsten J."/>
            <person name="Laisster N."/>
            <person name="Latreille P."/>
            <person name="Lightning J."/>
            <person name="Lloyd C."/>
            <person name="Mortimore B."/>
            <person name="O'Callaghan M."/>
            <person name="Parsons J."/>
            <person name="Percy C."/>
            <person name="Rifken L."/>
            <person name="Roopra A."/>
            <person name="Saunders D."/>
            <person name="Shownkeen R."/>
            <person name="Sims M."/>
            <person name="Smaldon N."/>
            <person name="Smith A."/>
            <person name="Smith M."/>
            <person name="Sonnhammer E."/>
            <person name="Staden R."/>
            <person name="Sulston J."/>
            <person name="Thierry-Mieg J."/>
            <person name="Thomas K."/>
            <person name="Vaudin M."/>
            <person name="Vaughan K."/>
            <person name="Waterston R."/>
            <person name="Watson A."/>
            <person name="Weinstock L."/>
            <person name="Wilkinson-Sproat J."/>
            <person name="Wohldman P."/>
        </authorList>
    </citation>
    <scope>NUCLEOTIDE SEQUENCE [LARGE SCALE GENOMIC DNA]</scope>
    <source>
        <strain>Bristol N2</strain>
    </source>
</reference>
<reference key="2">
    <citation type="journal article" date="1998" name="Science">
        <title>Genome sequence of the nematode C. elegans: a platform for investigating biology.</title>
        <authorList>
            <consortium name="The C. elegans sequencing consortium"/>
        </authorList>
    </citation>
    <scope>NUCLEOTIDE SEQUENCE [LARGE SCALE GENOMIC DNA]</scope>
    <source>
        <strain>Bristol N2</strain>
    </source>
</reference>
<dbReference type="EC" id="2.7.7.-"/>
<dbReference type="EMBL" id="Z22179">
    <property type="protein sequence ID" value="CAA80161.1"/>
    <property type="status" value="ALT_INIT"/>
    <property type="molecule type" value="Genomic_DNA"/>
</dbReference>
<dbReference type="PIR" id="S40976">
    <property type="entry name" value="S40976"/>
</dbReference>
<dbReference type="RefSeq" id="NP_001255015.1">
    <property type="nucleotide sequence ID" value="NM_001268086.2"/>
</dbReference>
<dbReference type="SMR" id="P34471"/>
<dbReference type="BioGRID" id="41553">
    <property type="interactions" value="4"/>
</dbReference>
<dbReference type="FunCoup" id="P34471">
    <property type="interactions" value="1316"/>
</dbReference>
<dbReference type="IntAct" id="P34471">
    <property type="interactions" value="2"/>
</dbReference>
<dbReference type="MINT" id="P34471"/>
<dbReference type="STRING" id="6239.F58A4.4a.1"/>
<dbReference type="PaxDb" id="6239-F58A4.4a"/>
<dbReference type="PeptideAtlas" id="P34471"/>
<dbReference type="EnsemblMetazoa" id="F58A4.4a.1">
    <property type="protein sequence ID" value="F58A4.4a.1"/>
    <property type="gene ID" value="WBGene00004180"/>
</dbReference>
<dbReference type="GeneID" id="176358"/>
<dbReference type="KEGG" id="cel:CELE_F58A4.4"/>
<dbReference type="UCSC" id="F58A4.4">
    <property type="organism name" value="c. elegans"/>
</dbReference>
<dbReference type="AGR" id="WB:WBGene00004180"/>
<dbReference type="CTD" id="176358"/>
<dbReference type="WormBase" id="F58A4.4a">
    <property type="protein sequence ID" value="CE00220"/>
    <property type="gene ID" value="WBGene00004180"/>
    <property type="gene designation" value="pri-1"/>
</dbReference>
<dbReference type="eggNOG" id="KOG2851">
    <property type="taxonomic scope" value="Eukaryota"/>
</dbReference>
<dbReference type="GeneTree" id="ENSGT00390000011466"/>
<dbReference type="HOGENOM" id="CLU_028288_3_2_1"/>
<dbReference type="InParanoid" id="P34471"/>
<dbReference type="OMA" id="NVTRGFN"/>
<dbReference type="OrthoDB" id="19606at2759"/>
<dbReference type="PhylomeDB" id="P34471"/>
<dbReference type="Reactome" id="R-CEL-113501">
    <property type="pathway name" value="Inhibition of replication initiation of damaged DNA by RB1/E2F1"/>
</dbReference>
<dbReference type="Reactome" id="R-CEL-68952">
    <property type="pathway name" value="DNA replication initiation"/>
</dbReference>
<dbReference type="Reactome" id="R-CEL-68962">
    <property type="pathway name" value="Activation of the pre-replicative complex"/>
</dbReference>
<dbReference type="Reactome" id="R-CEL-69091">
    <property type="pathway name" value="Polymerase switching"/>
</dbReference>
<dbReference type="Reactome" id="R-CEL-69166">
    <property type="pathway name" value="Removal of the Flap Intermediate"/>
</dbReference>
<dbReference type="Reactome" id="R-CEL-69183">
    <property type="pathway name" value="Processive synthesis on the lagging strand"/>
</dbReference>
<dbReference type="PRO" id="PR:P34471"/>
<dbReference type="Proteomes" id="UP000001940">
    <property type="component" value="Chromosome III"/>
</dbReference>
<dbReference type="Bgee" id="WBGene00004180">
    <property type="expression patterns" value="Expressed in germ line (C elegans) and 4 other cell types or tissues"/>
</dbReference>
<dbReference type="ExpressionAtlas" id="P34471">
    <property type="expression patterns" value="baseline and differential"/>
</dbReference>
<dbReference type="GO" id="GO:0005658">
    <property type="term" value="C:alpha DNA polymerase:primase complex"/>
    <property type="evidence" value="ECO:0000318"/>
    <property type="project" value="GO_Central"/>
</dbReference>
<dbReference type="GO" id="GO:0003899">
    <property type="term" value="F:DNA-directed RNA polymerase activity"/>
    <property type="evidence" value="ECO:0007669"/>
    <property type="project" value="InterPro"/>
</dbReference>
<dbReference type="GO" id="GO:0046872">
    <property type="term" value="F:metal ion binding"/>
    <property type="evidence" value="ECO:0007669"/>
    <property type="project" value="UniProtKB-KW"/>
</dbReference>
<dbReference type="GO" id="GO:0006269">
    <property type="term" value="P:DNA replication, synthesis of primer"/>
    <property type="evidence" value="ECO:0000318"/>
    <property type="project" value="GO_Central"/>
</dbReference>
<dbReference type="CDD" id="cd04860">
    <property type="entry name" value="AE_Prim_S"/>
    <property type="match status" value="1"/>
</dbReference>
<dbReference type="FunFam" id="3.90.920.10:FF:000003">
    <property type="entry name" value="DNA primase"/>
    <property type="match status" value="1"/>
</dbReference>
<dbReference type="Gene3D" id="3.90.920.10">
    <property type="entry name" value="DNA primase, PRIM domain"/>
    <property type="match status" value="1"/>
</dbReference>
<dbReference type="InterPro" id="IPR002755">
    <property type="entry name" value="DNA_primase_S"/>
</dbReference>
<dbReference type="InterPro" id="IPR014052">
    <property type="entry name" value="DNA_primase_ssu_euk/arc"/>
</dbReference>
<dbReference type="NCBIfam" id="TIGR00335">
    <property type="entry name" value="primase_sml"/>
    <property type="match status" value="1"/>
</dbReference>
<dbReference type="PANTHER" id="PTHR10536">
    <property type="entry name" value="DNA PRIMASE SMALL SUBUNIT"/>
    <property type="match status" value="1"/>
</dbReference>
<dbReference type="Pfam" id="PF01896">
    <property type="entry name" value="DNA_primase_S"/>
    <property type="match status" value="1"/>
</dbReference>
<dbReference type="SUPFAM" id="SSF56747">
    <property type="entry name" value="Prim-pol domain"/>
    <property type="match status" value="1"/>
</dbReference>
<organism>
    <name type="scientific">Caenorhabditis elegans</name>
    <dbReference type="NCBI Taxonomy" id="6239"/>
    <lineage>
        <taxon>Eukaryota</taxon>
        <taxon>Metazoa</taxon>
        <taxon>Ecdysozoa</taxon>
        <taxon>Nematoda</taxon>
        <taxon>Chromadorea</taxon>
        <taxon>Rhabditida</taxon>
        <taxon>Rhabditina</taxon>
        <taxon>Rhabditomorpha</taxon>
        <taxon>Rhabditoidea</taxon>
        <taxon>Rhabditidae</taxon>
        <taxon>Peloderinae</taxon>
        <taxon>Caenorhabditis</taxon>
    </lineage>
</organism>
<accession>P34471</accession>
<gene>
    <name type="primary">pri-1</name>
    <name type="ORF">F58A4.4</name>
</gene>
<name>PRI1_CAEEL</name>
<evidence type="ECO:0000250" key="1"/>
<evidence type="ECO:0000255" key="2"/>
<evidence type="ECO:0000305" key="3"/>
<comment type="function">
    <text evidence="1">DNA primase is the polymerase that synthesizes small RNA primers for the Okazaki fragments made during discontinuous DNA replication.</text>
</comment>
<comment type="subunit">
    <text>Heterodimer of a small subunit and a large subunit.</text>
</comment>
<comment type="miscellaneous">
    <text evidence="1">The bound zinc ion is not a cofactor. It is bound to a zinc knuckle motif that may be involved in sequence recognition and the binding of ssDNA (By similarity).</text>
</comment>
<comment type="similarity">
    <text evidence="3">Belongs to the eukaryotic-type primase small subunit family.</text>
</comment>
<comment type="sequence caution" evidence="3">
    <conflict type="erroneous initiation">
        <sequence resource="EMBL-CDS" id="CAA80161"/>
    </conflict>
</comment>
<feature type="chain" id="PRO_0000046732" description="DNA primase small subunit">
    <location>
        <begin position="1"/>
        <end position="410"/>
    </location>
</feature>
<feature type="short sequence motif" description="Zinc knuckle motif">
    <location>
        <begin position="118"/>
        <end position="129"/>
    </location>
</feature>
<feature type="active site" evidence="2">
    <location>
        <position position="43"/>
    </location>
</feature>
<feature type="active site" evidence="2">
    <location>
        <position position="106"/>
    </location>
</feature>
<feature type="active site" evidence="2">
    <location>
        <position position="108"/>
    </location>
</feature>